<proteinExistence type="evidence at protein level"/>
<comment type="function">
    <text evidence="2">Branched-chain amino acid transport system which is involved in the uptake of isoleucine and valine (PubMed:25645558). Probably does not transport leucine (PubMed:25645558). Together with BcaP and BraB, plays an important role in the activation of CodY, a branched-chain amino acid-responsive transcriptional regulator that controls the expression of several dozen transcription units in B.subtilis (PubMed:25645558).</text>
</comment>
<comment type="biophysicochemical properties">
    <kinetics>
        <KM evidence="2">17 uM for isoleucine</KM>
        <Vmax evidence="2">59.0 nmol/min/mg enzyme with isoleucine as substrate</Vmax>
    </kinetics>
</comment>
<comment type="subcellular location">
    <subcellularLocation>
        <location evidence="4">Cell membrane</location>
        <topology evidence="1">Multi-pass membrane protein</topology>
    </subcellularLocation>
</comment>
<comment type="similarity">
    <text evidence="4">Belongs to the branched chain amino acid transporter family.</text>
</comment>
<dbReference type="EMBL" id="U79494">
    <property type="protein sequence ID" value="AAB47961.1"/>
    <property type="molecule type" value="Genomic_DNA"/>
</dbReference>
<dbReference type="EMBL" id="U93876">
    <property type="protein sequence ID" value="AAB80903.1"/>
    <property type="molecule type" value="Genomic_DNA"/>
</dbReference>
<dbReference type="EMBL" id="AL009126">
    <property type="protein sequence ID" value="CAB14610.1"/>
    <property type="molecule type" value="Genomic_DNA"/>
</dbReference>
<dbReference type="PIR" id="D69596">
    <property type="entry name" value="D69596"/>
</dbReference>
<dbReference type="RefSeq" id="NP_390546.1">
    <property type="nucleotide sequence ID" value="NC_000964.3"/>
</dbReference>
<dbReference type="RefSeq" id="WP_003246136.1">
    <property type="nucleotide sequence ID" value="NZ_OZ025638.1"/>
</dbReference>
<dbReference type="FunCoup" id="P94499">
    <property type="interactions" value="84"/>
</dbReference>
<dbReference type="STRING" id="224308.BSU26690"/>
<dbReference type="PaxDb" id="224308-BSU26690"/>
<dbReference type="EnsemblBacteria" id="CAB14610">
    <property type="protein sequence ID" value="CAB14610"/>
    <property type="gene ID" value="BSU_26690"/>
</dbReference>
<dbReference type="GeneID" id="936930"/>
<dbReference type="KEGG" id="bsu:BSU26690"/>
<dbReference type="PATRIC" id="fig|224308.179.peg.2899"/>
<dbReference type="eggNOG" id="COG1114">
    <property type="taxonomic scope" value="Bacteria"/>
</dbReference>
<dbReference type="InParanoid" id="P94499"/>
<dbReference type="OrthoDB" id="9783920at2"/>
<dbReference type="PhylomeDB" id="P94499"/>
<dbReference type="BioCyc" id="BSUB:BSU26690-MONOMER"/>
<dbReference type="Proteomes" id="UP000001570">
    <property type="component" value="Chromosome"/>
</dbReference>
<dbReference type="GO" id="GO:0005886">
    <property type="term" value="C:plasma membrane"/>
    <property type="evidence" value="ECO:0000318"/>
    <property type="project" value="GO_Central"/>
</dbReference>
<dbReference type="GO" id="GO:0015188">
    <property type="term" value="F:L-isoleucine transmembrane transporter activity"/>
    <property type="evidence" value="ECO:0000318"/>
    <property type="project" value="GO_Central"/>
</dbReference>
<dbReference type="GO" id="GO:0015190">
    <property type="term" value="F:L-leucine transmembrane transporter activity"/>
    <property type="evidence" value="ECO:0000318"/>
    <property type="project" value="GO_Central"/>
</dbReference>
<dbReference type="GO" id="GO:0005304">
    <property type="term" value="F:L-valine transmembrane transporter activity"/>
    <property type="evidence" value="ECO:0000318"/>
    <property type="project" value="GO_Central"/>
</dbReference>
<dbReference type="GO" id="GO:0015818">
    <property type="term" value="P:isoleucine transport"/>
    <property type="evidence" value="ECO:0000318"/>
    <property type="project" value="GO_Central"/>
</dbReference>
<dbReference type="GO" id="GO:0015820">
    <property type="term" value="P:L-leucine transport"/>
    <property type="evidence" value="ECO:0000318"/>
    <property type="project" value="GO_Central"/>
</dbReference>
<dbReference type="GO" id="GO:0015829">
    <property type="term" value="P:valine transport"/>
    <property type="evidence" value="ECO:0000318"/>
    <property type="project" value="GO_Central"/>
</dbReference>
<dbReference type="InterPro" id="IPR004685">
    <property type="entry name" value="Brnchd-chn_aa_trnsp_Livcs"/>
</dbReference>
<dbReference type="NCBIfam" id="TIGR00796">
    <property type="entry name" value="livcs"/>
    <property type="match status" value="1"/>
</dbReference>
<dbReference type="PANTHER" id="PTHR30588:SF0">
    <property type="entry name" value="BRANCHED-CHAIN AMINO ACID PERMEASE BRNQ"/>
    <property type="match status" value="1"/>
</dbReference>
<dbReference type="PANTHER" id="PTHR30588">
    <property type="entry name" value="BRANCHED-CHAIN AMINO ACID TRANSPORT SYSTEM 2 CARRIER PROTEIN"/>
    <property type="match status" value="1"/>
</dbReference>
<dbReference type="Pfam" id="PF05525">
    <property type="entry name" value="Branch_AA_trans"/>
    <property type="match status" value="1"/>
</dbReference>
<accession>P94499</accession>
<accession>O07082</accession>
<sequence length="440" mass="47006">MSKKVSASYIIIIGLMLFALFFGAGNLIFPPMLGQLAGKNVWVANAGFLVTGVGLPLLAITAFVFSGKQNLQSLASRVHPVFGIVFTTILYLAIGPFFAIPRSGNVSFEIGVKPFLSNDASPVSLIIFTILFFALACLLSLNPSKIIDIVGKFLTPIKLTFIGLLVAVALIRPIGTIQAPSKGYTSQAFFKGFQEGYLTLDALVAFVFGIIIVNALKEQGASTKKQLIVVCAKAAAIAAVLLAVMYTALSYMGASSVEELGILENGAEVLAKVSSYYFGSYGSILLGLMITVACLTTSVGLITACSSFFHELFPNISYKKIAVVLSVFSTLVANIGLTQLIKVSMPVLLTMYPIAISLIFLTFLHSVFKGKTEVYQGSLLFAFIISLFDGLKAAGIKIEVVNRIFTQILPMYNIGLGWLIPAIAGGICGYILSIFRTKTS</sequence>
<name>BRNQ_BACSU</name>
<feature type="chain" id="PRO_0000099771" description="Branched-chain amino acid permease BrnQ">
    <location>
        <begin position="1"/>
        <end position="440"/>
    </location>
</feature>
<feature type="transmembrane region" description="Helical" evidence="1">
    <location>
        <begin position="9"/>
        <end position="29"/>
    </location>
</feature>
<feature type="transmembrane region" description="Helical" evidence="1">
    <location>
        <begin position="46"/>
        <end position="66"/>
    </location>
</feature>
<feature type="transmembrane region" description="Helical" evidence="1">
    <location>
        <begin position="80"/>
        <end position="100"/>
    </location>
</feature>
<feature type="transmembrane region" description="Helical" evidence="1">
    <location>
        <begin position="121"/>
        <end position="141"/>
    </location>
</feature>
<feature type="transmembrane region" description="Helical" evidence="1">
    <location>
        <begin position="149"/>
        <end position="169"/>
    </location>
</feature>
<feature type="transmembrane region" description="Helical" evidence="1">
    <location>
        <begin position="196"/>
        <end position="216"/>
    </location>
</feature>
<feature type="transmembrane region" description="Helical" evidence="1">
    <location>
        <begin position="227"/>
        <end position="247"/>
    </location>
</feature>
<feature type="transmembrane region" description="Helical" evidence="1">
    <location>
        <begin position="284"/>
        <end position="304"/>
    </location>
</feature>
<feature type="transmembrane region" description="Helical" evidence="1">
    <location>
        <begin position="321"/>
        <end position="341"/>
    </location>
</feature>
<feature type="transmembrane region" description="Helical" evidence="1">
    <location>
        <begin position="348"/>
        <end position="368"/>
    </location>
</feature>
<feature type="transmembrane region" description="Helical" evidence="1">
    <location>
        <begin position="378"/>
        <end position="398"/>
    </location>
</feature>
<feature type="transmembrane region" description="Helical" evidence="1">
    <location>
        <begin position="414"/>
        <end position="434"/>
    </location>
</feature>
<feature type="sequence conflict" description="In Ref. 1; AAB47961." evidence="4" ref="1">
    <original>L</original>
    <variation>V</variation>
    <location>
        <position position="331"/>
    </location>
</feature>
<gene>
    <name evidence="3" type="primary">brnQ</name>
    <name type="synonym">yrdJ</name>
    <name type="ordered locus">BSU26690</name>
</gene>
<keyword id="KW-0029">Amino-acid transport</keyword>
<keyword id="KW-1003">Cell membrane</keyword>
<keyword id="KW-0472">Membrane</keyword>
<keyword id="KW-1185">Reference proteome</keyword>
<keyword id="KW-0812">Transmembrane</keyword>
<keyword id="KW-1133">Transmembrane helix</keyword>
<keyword id="KW-0813">Transport</keyword>
<evidence type="ECO:0000255" key="1"/>
<evidence type="ECO:0000269" key="2">
    <source>
    </source>
</evidence>
<evidence type="ECO:0000303" key="3">
    <source>
    </source>
</evidence>
<evidence type="ECO:0000305" key="4"/>
<organism>
    <name type="scientific">Bacillus subtilis (strain 168)</name>
    <dbReference type="NCBI Taxonomy" id="224308"/>
    <lineage>
        <taxon>Bacteria</taxon>
        <taxon>Bacillati</taxon>
        <taxon>Bacillota</taxon>
        <taxon>Bacilli</taxon>
        <taxon>Bacillales</taxon>
        <taxon>Bacillaceae</taxon>
        <taxon>Bacillus</taxon>
    </lineage>
</organism>
<protein>
    <recommendedName>
        <fullName evidence="4">Branched-chain amino acid permease BrnQ</fullName>
        <shortName evidence="3">BCAA permease</shortName>
    </recommendedName>
    <alternativeName>
        <fullName>Branched-chain amino acid transport system carrier protein BrnQ</fullName>
    </alternativeName>
    <alternativeName>
        <fullName>Branched-chain amino acid uptake carrier BrnQ</fullName>
    </alternativeName>
</protein>
<reference key="1">
    <citation type="journal article" date="1997" name="J. Bacteriol.">
        <title>Altered transcription activation specificity of a mutant form of Bacillus subtilis GltR, a LysR family member.</title>
        <authorList>
            <person name="Belitsky B.R."/>
            <person name="Sonenshein A.L."/>
        </authorList>
    </citation>
    <scope>NUCLEOTIDE SEQUENCE [GENOMIC DNA]</scope>
    <source>
        <strain>168 / SMY</strain>
    </source>
</reference>
<reference key="2">
    <citation type="journal article" date="1997" name="Microbiology">
        <title>Sequence of the Bacillus subtilis genome region in the vicinity of the lev operon reveals two new extracytoplasmic function RNA polymerase sigma factors SigV and SigZ.</title>
        <authorList>
            <person name="Sorokin A."/>
            <person name="Bolotin A."/>
            <person name="Purnelle B."/>
            <person name="Hilbert H."/>
            <person name="Lauber J."/>
            <person name="Duesterhoeft A."/>
            <person name="Ehrlich S.D."/>
        </authorList>
    </citation>
    <scope>NUCLEOTIDE SEQUENCE [GENOMIC DNA]</scope>
    <source>
        <strain>168</strain>
    </source>
</reference>
<reference key="3">
    <citation type="journal article" date="1997" name="Nature">
        <title>The complete genome sequence of the Gram-positive bacterium Bacillus subtilis.</title>
        <authorList>
            <person name="Kunst F."/>
            <person name="Ogasawara N."/>
            <person name="Moszer I."/>
            <person name="Albertini A.M."/>
            <person name="Alloni G."/>
            <person name="Azevedo V."/>
            <person name="Bertero M.G."/>
            <person name="Bessieres P."/>
            <person name="Bolotin A."/>
            <person name="Borchert S."/>
            <person name="Borriss R."/>
            <person name="Boursier L."/>
            <person name="Brans A."/>
            <person name="Braun M."/>
            <person name="Brignell S.C."/>
            <person name="Bron S."/>
            <person name="Brouillet S."/>
            <person name="Bruschi C.V."/>
            <person name="Caldwell B."/>
            <person name="Capuano V."/>
            <person name="Carter N.M."/>
            <person name="Choi S.-K."/>
            <person name="Codani J.-J."/>
            <person name="Connerton I.F."/>
            <person name="Cummings N.J."/>
            <person name="Daniel R.A."/>
            <person name="Denizot F."/>
            <person name="Devine K.M."/>
            <person name="Duesterhoeft A."/>
            <person name="Ehrlich S.D."/>
            <person name="Emmerson P.T."/>
            <person name="Entian K.-D."/>
            <person name="Errington J."/>
            <person name="Fabret C."/>
            <person name="Ferrari E."/>
            <person name="Foulger D."/>
            <person name="Fritz C."/>
            <person name="Fujita M."/>
            <person name="Fujita Y."/>
            <person name="Fuma S."/>
            <person name="Galizzi A."/>
            <person name="Galleron N."/>
            <person name="Ghim S.-Y."/>
            <person name="Glaser P."/>
            <person name="Goffeau A."/>
            <person name="Golightly E.J."/>
            <person name="Grandi G."/>
            <person name="Guiseppi G."/>
            <person name="Guy B.J."/>
            <person name="Haga K."/>
            <person name="Haiech J."/>
            <person name="Harwood C.R."/>
            <person name="Henaut A."/>
            <person name="Hilbert H."/>
            <person name="Holsappel S."/>
            <person name="Hosono S."/>
            <person name="Hullo M.-F."/>
            <person name="Itaya M."/>
            <person name="Jones L.-M."/>
            <person name="Joris B."/>
            <person name="Karamata D."/>
            <person name="Kasahara Y."/>
            <person name="Klaerr-Blanchard M."/>
            <person name="Klein C."/>
            <person name="Kobayashi Y."/>
            <person name="Koetter P."/>
            <person name="Koningstein G."/>
            <person name="Krogh S."/>
            <person name="Kumano M."/>
            <person name="Kurita K."/>
            <person name="Lapidus A."/>
            <person name="Lardinois S."/>
            <person name="Lauber J."/>
            <person name="Lazarevic V."/>
            <person name="Lee S.-M."/>
            <person name="Levine A."/>
            <person name="Liu H."/>
            <person name="Masuda S."/>
            <person name="Mauel C."/>
            <person name="Medigue C."/>
            <person name="Medina N."/>
            <person name="Mellado R.P."/>
            <person name="Mizuno M."/>
            <person name="Moestl D."/>
            <person name="Nakai S."/>
            <person name="Noback M."/>
            <person name="Noone D."/>
            <person name="O'Reilly M."/>
            <person name="Ogawa K."/>
            <person name="Ogiwara A."/>
            <person name="Oudega B."/>
            <person name="Park S.-H."/>
            <person name="Parro V."/>
            <person name="Pohl T.M."/>
            <person name="Portetelle D."/>
            <person name="Porwollik S."/>
            <person name="Prescott A.M."/>
            <person name="Presecan E."/>
            <person name="Pujic P."/>
            <person name="Purnelle B."/>
            <person name="Rapoport G."/>
            <person name="Rey M."/>
            <person name="Reynolds S."/>
            <person name="Rieger M."/>
            <person name="Rivolta C."/>
            <person name="Rocha E."/>
            <person name="Roche B."/>
            <person name="Rose M."/>
            <person name="Sadaie Y."/>
            <person name="Sato T."/>
            <person name="Scanlan E."/>
            <person name="Schleich S."/>
            <person name="Schroeter R."/>
            <person name="Scoffone F."/>
            <person name="Sekiguchi J."/>
            <person name="Sekowska A."/>
            <person name="Seror S.J."/>
            <person name="Serror P."/>
            <person name="Shin B.-S."/>
            <person name="Soldo B."/>
            <person name="Sorokin A."/>
            <person name="Tacconi E."/>
            <person name="Takagi T."/>
            <person name="Takahashi H."/>
            <person name="Takemaru K."/>
            <person name="Takeuchi M."/>
            <person name="Tamakoshi A."/>
            <person name="Tanaka T."/>
            <person name="Terpstra P."/>
            <person name="Tognoni A."/>
            <person name="Tosato V."/>
            <person name="Uchiyama S."/>
            <person name="Vandenbol M."/>
            <person name="Vannier F."/>
            <person name="Vassarotti A."/>
            <person name="Viari A."/>
            <person name="Wambutt R."/>
            <person name="Wedler E."/>
            <person name="Wedler H."/>
            <person name="Weitzenegger T."/>
            <person name="Winters P."/>
            <person name="Wipat A."/>
            <person name="Yamamoto H."/>
            <person name="Yamane K."/>
            <person name="Yasumoto K."/>
            <person name="Yata K."/>
            <person name="Yoshida K."/>
            <person name="Yoshikawa H.-F."/>
            <person name="Zumstein E."/>
            <person name="Yoshikawa H."/>
            <person name="Danchin A."/>
        </authorList>
    </citation>
    <scope>NUCLEOTIDE SEQUENCE [LARGE SCALE GENOMIC DNA]</scope>
    <source>
        <strain>168</strain>
    </source>
</reference>
<reference key="4">
    <citation type="journal article" date="2015" name="J. Bacteriol.">
        <title>Role of branched-chain amino acid transport in Bacillus subtilis CodY activity.</title>
        <authorList>
            <person name="Belitsky B.R."/>
        </authorList>
    </citation>
    <scope>FUNCTION</scope>
    <scope>BIOPHYSICOCHEMICAL PROPERTIES</scope>
    <source>
        <strain>168 / SMY</strain>
    </source>
</reference>